<feature type="chain" id="PRO_1000048713" description="Chromosomal replication initiator protein DnaA">
    <location>
        <begin position="1"/>
        <end position="454"/>
    </location>
</feature>
<feature type="region of interest" description="Domain I, interacts with DnaA modulators" evidence="1">
    <location>
        <begin position="1"/>
        <end position="71"/>
    </location>
</feature>
<feature type="region of interest" description="Domain II" evidence="1">
    <location>
        <begin position="71"/>
        <end position="112"/>
    </location>
</feature>
<feature type="region of interest" description="Disordered" evidence="2">
    <location>
        <begin position="82"/>
        <end position="108"/>
    </location>
</feature>
<feature type="region of interest" description="Domain III, AAA+ region" evidence="1">
    <location>
        <begin position="113"/>
        <end position="334"/>
    </location>
</feature>
<feature type="region of interest" description="Domain IV, binds dsDNA" evidence="1">
    <location>
        <begin position="335"/>
        <end position="454"/>
    </location>
</feature>
<feature type="compositionally biased region" description="Low complexity" evidence="2">
    <location>
        <begin position="84"/>
        <end position="99"/>
    </location>
</feature>
<feature type="binding site" evidence="1">
    <location>
        <position position="157"/>
    </location>
    <ligand>
        <name>ATP</name>
        <dbReference type="ChEBI" id="CHEBI:30616"/>
    </ligand>
</feature>
<feature type="binding site" evidence="1">
    <location>
        <position position="159"/>
    </location>
    <ligand>
        <name>ATP</name>
        <dbReference type="ChEBI" id="CHEBI:30616"/>
    </ligand>
</feature>
<feature type="binding site" evidence="1">
    <location>
        <position position="160"/>
    </location>
    <ligand>
        <name>ATP</name>
        <dbReference type="ChEBI" id="CHEBI:30616"/>
    </ligand>
</feature>
<feature type="binding site" evidence="1">
    <location>
        <position position="161"/>
    </location>
    <ligand>
        <name>ATP</name>
        <dbReference type="ChEBI" id="CHEBI:30616"/>
    </ligand>
</feature>
<comment type="function">
    <text evidence="1">Plays an essential role in the initiation and regulation of chromosomal replication. ATP-DnaA binds to the origin of replication (oriC) to initiate formation of the DNA replication initiation complex once per cell cycle. Binds the DnaA box (a 9 base pair repeat at the origin) and separates the double-stranded (ds)DNA. Forms a right-handed helical filament on oriC DNA; dsDNA binds to the exterior of the filament while single-stranded (ss)DNA is stabiized in the filament's interior. The ATP-DnaA-oriC complex binds and stabilizes one strand of the AT-rich DNA unwinding element (DUE), permitting loading of DNA polymerase. After initiation quickly degrades to an ADP-DnaA complex that is not apt for DNA replication. Binds acidic phospholipids.</text>
</comment>
<comment type="subunit">
    <text evidence="1">Oligomerizes as a right-handed, spiral filament on DNA at oriC.</text>
</comment>
<comment type="subcellular location">
    <subcellularLocation>
        <location evidence="1">Cytoplasm</location>
    </subcellularLocation>
</comment>
<comment type="domain">
    <text evidence="1">Domain I is involved in oligomerization and binding regulators, domain II is flexibile and of varying length in different bacteria, domain III forms the AAA+ region, while domain IV binds dsDNA.</text>
</comment>
<comment type="similarity">
    <text evidence="1">Belongs to the DnaA family.</text>
</comment>
<protein>
    <recommendedName>
        <fullName evidence="1">Chromosomal replication initiator protein DnaA</fullName>
    </recommendedName>
</protein>
<reference key="1">
    <citation type="journal article" date="2007" name="J. Bacteriol.">
        <title>The complete genome sequence of Roseobacter denitrificans reveals a mixotrophic rather than photosynthetic metabolism.</title>
        <authorList>
            <person name="Swingley W.D."/>
            <person name="Sadekar S."/>
            <person name="Mastrian S.D."/>
            <person name="Matthies H.J."/>
            <person name="Hao J."/>
            <person name="Ramos H."/>
            <person name="Acharya C.R."/>
            <person name="Conrad A.L."/>
            <person name="Taylor H.L."/>
            <person name="Dejesa L.C."/>
            <person name="Shah M.K."/>
            <person name="O'Huallachain M.E."/>
            <person name="Lince M.T."/>
            <person name="Blankenship R.E."/>
            <person name="Beatty J.T."/>
            <person name="Touchman J.W."/>
        </authorList>
    </citation>
    <scope>NUCLEOTIDE SEQUENCE [LARGE SCALE GENOMIC DNA]</scope>
    <source>
        <strain>ATCC 33942 / OCh 114</strain>
    </source>
</reference>
<gene>
    <name evidence="1" type="primary">dnaA</name>
    <name type="ordered locus">RD1_0208</name>
</gene>
<sequence length="454" mass="51671">MTKEQWGQLQQRLLKTVGQNNYKNWIEPIEFGSTQDGVATFEVPTNFLGNYVSQNFADLILHEVRQEDPAVRRLRFAVPSHVNATTKPARPAQATAPRAPAEKTPRSTLSTAPLDARFTFDNFIVGKPNELAHAAAKRVAEGGPVTFNPLFLYGGVGLGKTHLMHAIAHELRLRRPEMNVLYLSAEQFMYRFVQALRDRKMMDFKEIFRSVDVLMVDDVQFIAGKGSTQEEFFHTFNALVDQNKQIIISGDRAPGEIKDMEERVKSRLQCGLVVDLHPTDYELRLGILQSKVEQQRKNYPGLDISDGVLEFLAHRISTNVRVLEGALTRLCAFASLVGREIDMELTQDCLSDVLRASERKITVEEIQRKVSDHYNIRLSDMIGPKRLRSYARPRQVAMYLSKKMTSRSLPEIGRRFGGRDHTTVMHGVKRIEELKIQDGQIAEDLELLRRALEE</sequence>
<organism>
    <name type="scientific">Roseobacter denitrificans (strain ATCC 33942 / OCh 114)</name>
    <name type="common">Erythrobacter sp. (strain OCh 114)</name>
    <name type="synonym">Roseobacter denitrificans</name>
    <dbReference type="NCBI Taxonomy" id="375451"/>
    <lineage>
        <taxon>Bacteria</taxon>
        <taxon>Pseudomonadati</taxon>
        <taxon>Pseudomonadota</taxon>
        <taxon>Alphaproteobacteria</taxon>
        <taxon>Rhodobacterales</taxon>
        <taxon>Roseobacteraceae</taxon>
        <taxon>Roseobacter</taxon>
    </lineage>
</organism>
<accession>Q16DK6</accession>
<name>DNAA_ROSDO</name>
<keyword id="KW-0067">ATP-binding</keyword>
<keyword id="KW-0963">Cytoplasm</keyword>
<keyword id="KW-0235">DNA replication</keyword>
<keyword id="KW-0238">DNA-binding</keyword>
<keyword id="KW-0446">Lipid-binding</keyword>
<keyword id="KW-0547">Nucleotide-binding</keyword>
<keyword id="KW-1185">Reference proteome</keyword>
<proteinExistence type="inferred from homology"/>
<evidence type="ECO:0000255" key="1">
    <source>
        <dbReference type="HAMAP-Rule" id="MF_00377"/>
    </source>
</evidence>
<evidence type="ECO:0000256" key="2">
    <source>
        <dbReference type="SAM" id="MobiDB-lite"/>
    </source>
</evidence>
<dbReference type="EMBL" id="CP000362">
    <property type="protein sequence ID" value="ABG29937.1"/>
    <property type="molecule type" value="Genomic_DNA"/>
</dbReference>
<dbReference type="RefSeq" id="WP_011566559.1">
    <property type="nucleotide sequence ID" value="NC_008209.1"/>
</dbReference>
<dbReference type="SMR" id="Q16DK6"/>
<dbReference type="STRING" id="375451.RD1_0208"/>
<dbReference type="KEGG" id="rde:RD1_0208"/>
<dbReference type="eggNOG" id="COG0593">
    <property type="taxonomic scope" value="Bacteria"/>
</dbReference>
<dbReference type="HOGENOM" id="CLU_026910_3_0_5"/>
<dbReference type="OrthoDB" id="9807019at2"/>
<dbReference type="Proteomes" id="UP000007029">
    <property type="component" value="Chromosome"/>
</dbReference>
<dbReference type="GO" id="GO:0005737">
    <property type="term" value="C:cytoplasm"/>
    <property type="evidence" value="ECO:0007669"/>
    <property type="project" value="UniProtKB-SubCell"/>
</dbReference>
<dbReference type="GO" id="GO:0005886">
    <property type="term" value="C:plasma membrane"/>
    <property type="evidence" value="ECO:0007669"/>
    <property type="project" value="TreeGrafter"/>
</dbReference>
<dbReference type="GO" id="GO:0005524">
    <property type="term" value="F:ATP binding"/>
    <property type="evidence" value="ECO:0007669"/>
    <property type="project" value="UniProtKB-UniRule"/>
</dbReference>
<dbReference type="GO" id="GO:0016887">
    <property type="term" value="F:ATP hydrolysis activity"/>
    <property type="evidence" value="ECO:0007669"/>
    <property type="project" value="InterPro"/>
</dbReference>
<dbReference type="GO" id="GO:0003688">
    <property type="term" value="F:DNA replication origin binding"/>
    <property type="evidence" value="ECO:0007669"/>
    <property type="project" value="UniProtKB-UniRule"/>
</dbReference>
<dbReference type="GO" id="GO:0008289">
    <property type="term" value="F:lipid binding"/>
    <property type="evidence" value="ECO:0007669"/>
    <property type="project" value="UniProtKB-KW"/>
</dbReference>
<dbReference type="GO" id="GO:0006270">
    <property type="term" value="P:DNA replication initiation"/>
    <property type="evidence" value="ECO:0007669"/>
    <property type="project" value="UniProtKB-UniRule"/>
</dbReference>
<dbReference type="GO" id="GO:0006275">
    <property type="term" value="P:regulation of DNA replication"/>
    <property type="evidence" value="ECO:0007669"/>
    <property type="project" value="UniProtKB-UniRule"/>
</dbReference>
<dbReference type="CDD" id="cd00009">
    <property type="entry name" value="AAA"/>
    <property type="match status" value="1"/>
</dbReference>
<dbReference type="CDD" id="cd06571">
    <property type="entry name" value="Bac_DnaA_C"/>
    <property type="match status" value="1"/>
</dbReference>
<dbReference type="FunFam" id="3.40.50.300:FF:000668">
    <property type="entry name" value="Chromosomal replication initiator protein DnaA"/>
    <property type="match status" value="1"/>
</dbReference>
<dbReference type="Gene3D" id="1.10.1750.10">
    <property type="match status" value="1"/>
</dbReference>
<dbReference type="Gene3D" id="1.10.8.60">
    <property type="match status" value="1"/>
</dbReference>
<dbReference type="Gene3D" id="3.30.300.180">
    <property type="match status" value="1"/>
</dbReference>
<dbReference type="Gene3D" id="3.40.50.300">
    <property type="entry name" value="P-loop containing nucleotide triphosphate hydrolases"/>
    <property type="match status" value="1"/>
</dbReference>
<dbReference type="HAMAP" id="MF_00377">
    <property type="entry name" value="DnaA_bact"/>
    <property type="match status" value="1"/>
</dbReference>
<dbReference type="InterPro" id="IPR003593">
    <property type="entry name" value="AAA+_ATPase"/>
</dbReference>
<dbReference type="InterPro" id="IPR001957">
    <property type="entry name" value="Chromosome_initiator_DnaA"/>
</dbReference>
<dbReference type="InterPro" id="IPR020591">
    <property type="entry name" value="Chromosome_initiator_DnaA-like"/>
</dbReference>
<dbReference type="InterPro" id="IPR018312">
    <property type="entry name" value="Chromosome_initiator_DnaA_CS"/>
</dbReference>
<dbReference type="InterPro" id="IPR013159">
    <property type="entry name" value="DnaA_C"/>
</dbReference>
<dbReference type="InterPro" id="IPR013317">
    <property type="entry name" value="DnaA_dom"/>
</dbReference>
<dbReference type="InterPro" id="IPR024633">
    <property type="entry name" value="DnaA_N_dom"/>
</dbReference>
<dbReference type="InterPro" id="IPR038454">
    <property type="entry name" value="DnaA_N_sf"/>
</dbReference>
<dbReference type="InterPro" id="IPR027417">
    <property type="entry name" value="P-loop_NTPase"/>
</dbReference>
<dbReference type="InterPro" id="IPR010921">
    <property type="entry name" value="Trp_repressor/repl_initiator"/>
</dbReference>
<dbReference type="NCBIfam" id="TIGR00362">
    <property type="entry name" value="DnaA"/>
    <property type="match status" value="1"/>
</dbReference>
<dbReference type="PANTHER" id="PTHR30050">
    <property type="entry name" value="CHROMOSOMAL REPLICATION INITIATOR PROTEIN DNAA"/>
    <property type="match status" value="1"/>
</dbReference>
<dbReference type="PANTHER" id="PTHR30050:SF2">
    <property type="entry name" value="CHROMOSOMAL REPLICATION INITIATOR PROTEIN DNAA"/>
    <property type="match status" value="1"/>
</dbReference>
<dbReference type="Pfam" id="PF00308">
    <property type="entry name" value="Bac_DnaA"/>
    <property type="match status" value="1"/>
</dbReference>
<dbReference type="Pfam" id="PF08299">
    <property type="entry name" value="Bac_DnaA_C"/>
    <property type="match status" value="1"/>
</dbReference>
<dbReference type="Pfam" id="PF11638">
    <property type="entry name" value="DnaA_N"/>
    <property type="match status" value="1"/>
</dbReference>
<dbReference type="PRINTS" id="PR00051">
    <property type="entry name" value="DNAA"/>
</dbReference>
<dbReference type="SMART" id="SM00382">
    <property type="entry name" value="AAA"/>
    <property type="match status" value="1"/>
</dbReference>
<dbReference type="SMART" id="SM00760">
    <property type="entry name" value="Bac_DnaA_C"/>
    <property type="match status" value="1"/>
</dbReference>
<dbReference type="SUPFAM" id="SSF52540">
    <property type="entry name" value="P-loop containing nucleoside triphosphate hydrolases"/>
    <property type="match status" value="1"/>
</dbReference>
<dbReference type="SUPFAM" id="SSF48295">
    <property type="entry name" value="TrpR-like"/>
    <property type="match status" value="1"/>
</dbReference>
<dbReference type="PROSITE" id="PS01008">
    <property type="entry name" value="DNAA"/>
    <property type="match status" value="1"/>
</dbReference>